<name>GLMM_HAHCH</name>
<gene>
    <name evidence="1" type="primary">glmM</name>
    <name type="ordered locus">HCH_01234</name>
</gene>
<organism>
    <name type="scientific">Hahella chejuensis (strain KCTC 2396)</name>
    <dbReference type="NCBI Taxonomy" id="349521"/>
    <lineage>
        <taxon>Bacteria</taxon>
        <taxon>Pseudomonadati</taxon>
        <taxon>Pseudomonadota</taxon>
        <taxon>Gammaproteobacteria</taxon>
        <taxon>Oceanospirillales</taxon>
        <taxon>Hahellaceae</taxon>
        <taxon>Hahella</taxon>
    </lineage>
</organism>
<feature type="chain" id="PRO_0000301323" description="Phosphoglucosamine mutase">
    <location>
        <begin position="1"/>
        <end position="445"/>
    </location>
</feature>
<feature type="active site" description="Phosphoserine intermediate" evidence="1">
    <location>
        <position position="102"/>
    </location>
</feature>
<feature type="binding site" description="via phosphate group" evidence="1">
    <location>
        <position position="102"/>
    </location>
    <ligand>
        <name>Mg(2+)</name>
        <dbReference type="ChEBI" id="CHEBI:18420"/>
    </ligand>
</feature>
<feature type="binding site" evidence="1">
    <location>
        <position position="241"/>
    </location>
    <ligand>
        <name>Mg(2+)</name>
        <dbReference type="ChEBI" id="CHEBI:18420"/>
    </ligand>
</feature>
<feature type="binding site" evidence="1">
    <location>
        <position position="243"/>
    </location>
    <ligand>
        <name>Mg(2+)</name>
        <dbReference type="ChEBI" id="CHEBI:18420"/>
    </ligand>
</feature>
<feature type="binding site" evidence="1">
    <location>
        <position position="245"/>
    </location>
    <ligand>
        <name>Mg(2+)</name>
        <dbReference type="ChEBI" id="CHEBI:18420"/>
    </ligand>
</feature>
<feature type="modified residue" description="Phosphoserine" evidence="1">
    <location>
        <position position="102"/>
    </location>
</feature>
<proteinExistence type="inferred from homology"/>
<dbReference type="EC" id="5.4.2.10" evidence="1"/>
<dbReference type="EMBL" id="CP000155">
    <property type="protein sequence ID" value="ABC28106.1"/>
    <property type="molecule type" value="Genomic_DNA"/>
</dbReference>
<dbReference type="RefSeq" id="WP_011395179.1">
    <property type="nucleotide sequence ID" value="NC_007645.1"/>
</dbReference>
<dbReference type="SMR" id="Q2SML8"/>
<dbReference type="STRING" id="349521.HCH_01234"/>
<dbReference type="KEGG" id="hch:HCH_01234"/>
<dbReference type="eggNOG" id="COG1109">
    <property type="taxonomic scope" value="Bacteria"/>
</dbReference>
<dbReference type="HOGENOM" id="CLU_016950_7_0_6"/>
<dbReference type="OrthoDB" id="9803322at2"/>
<dbReference type="Proteomes" id="UP000000238">
    <property type="component" value="Chromosome"/>
</dbReference>
<dbReference type="GO" id="GO:0005829">
    <property type="term" value="C:cytosol"/>
    <property type="evidence" value="ECO:0007669"/>
    <property type="project" value="TreeGrafter"/>
</dbReference>
<dbReference type="GO" id="GO:0000287">
    <property type="term" value="F:magnesium ion binding"/>
    <property type="evidence" value="ECO:0007669"/>
    <property type="project" value="UniProtKB-UniRule"/>
</dbReference>
<dbReference type="GO" id="GO:0008966">
    <property type="term" value="F:phosphoglucosamine mutase activity"/>
    <property type="evidence" value="ECO:0007669"/>
    <property type="project" value="UniProtKB-UniRule"/>
</dbReference>
<dbReference type="GO" id="GO:0004615">
    <property type="term" value="F:phosphomannomutase activity"/>
    <property type="evidence" value="ECO:0007669"/>
    <property type="project" value="TreeGrafter"/>
</dbReference>
<dbReference type="GO" id="GO:0005975">
    <property type="term" value="P:carbohydrate metabolic process"/>
    <property type="evidence" value="ECO:0007669"/>
    <property type="project" value="InterPro"/>
</dbReference>
<dbReference type="GO" id="GO:0009252">
    <property type="term" value="P:peptidoglycan biosynthetic process"/>
    <property type="evidence" value="ECO:0007669"/>
    <property type="project" value="TreeGrafter"/>
</dbReference>
<dbReference type="GO" id="GO:0006048">
    <property type="term" value="P:UDP-N-acetylglucosamine biosynthetic process"/>
    <property type="evidence" value="ECO:0007669"/>
    <property type="project" value="TreeGrafter"/>
</dbReference>
<dbReference type="CDD" id="cd05802">
    <property type="entry name" value="GlmM"/>
    <property type="match status" value="1"/>
</dbReference>
<dbReference type="FunFam" id="3.30.310.50:FF:000001">
    <property type="entry name" value="Phosphoglucosamine mutase"/>
    <property type="match status" value="1"/>
</dbReference>
<dbReference type="FunFam" id="3.40.120.10:FF:000001">
    <property type="entry name" value="Phosphoglucosamine mutase"/>
    <property type="match status" value="1"/>
</dbReference>
<dbReference type="FunFam" id="3.40.120.10:FF:000003">
    <property type="entry name" value="Phosphoglucosamine mutase"/>
    <property type="match status" value="1"/>
</dbReference>
<dbReference type="Gene3D" id="3.40.120.10">
    <property type="entry name" value="Alpha-D-Glucose-1,6-Bisphosphate, subunit A, domain 3"/>
    <property type="match status" value="3"/>
</dbReference>
<dbReference type="Gene3D" id="3.30.310.50">
    <property type="entry name" value="Alpha-D-phosphohexomutase, C-terminal domain"/>
    <property type="match status" value="1"/>
</dbReference>
<dbReference type="HAMAP" id="MF_01554_B">
    <property type="entry name" value="GlmM_B"/>
    <property type="match status" value="1"/>
</dbReference>
<dbReference type="InterPro" id="IPR005844">
    <property type="entry name" value="A-D-PHexomutase_a/b/a-I"/>
</dbReference>
<dbReference type="InterPro" id="IPR016055">
    <property type="entry name" value="A-D-PHexomutase_a/b/a-I/II/III"/>
</dbReference>
<dbReference type="InterPro" id="IPR005845">
    <property type="entry name" value="A-D-PHexomutase_a/b/a-II"/>
</dbReference>
<dbReference type="InterPro" id="IPR005846">
    <property type="entry name" value="A-D-PHexomutase_a/b/a-III"/>
</dbReference>
<dbReference type="InterPro" id="IPR005843">
    <property type="entry name" value="A-D-PHexomutase_C"/>
</dbReference>
<dbReference type="InterPro" id="IPR036900">
    <property type="entry name" value="A-D-PHexomutase_C_sf"/>
</dbReference>
<dbReference type="InterPro" id="IPR016066">
    <property type="entry name" value="A-D-PHexomutase_CS"/>
</dbReference>
<dbReference type="InterPro" id="IPR005841">
    <property type="entry name" value="Alpha-D-phosphohexomutase_SF"/>
</dbReference>
<dbReference type="InterPro" id="IPR006352">
    <property type="entry name" value="GlmM_bact"/>
</dbReference>
<dbReference type="InterPro" id="IPR050060">
    <property type="entry name" value="Phosphoglucosamine_mutase"/>
</dbReference>
<dbReference type="NCBIfam" id="TIGR01455">
    <property type="entry name" value="glmM"/>
    <property type="match status" value="1"/>
</dbReference>
<dbReference type="NCBIfam" id="NF008139">
    <property type="entry name" value="PRK10887.1"/>
    <property type="match status" value="1"/>
</dbReference>
<dbReference type="PANTHER" id="PTHR42946:SF1">
    <property type="entry name" value="PHOSPHOGLUCOMUTASE (ALPHA-D-GLUCOSE-1,6-BISPHOSPHATE-DEPENDENT)"/>
    <property type="match status" value="1"/>
</dbReference>
<dbReference type="PANTHER" id="PTHR42946">
    <property type="entry name" value="PHOSPHOHEXOSE MUTASE"/>
    <property type="match status" value="1"/>
</dbReference>
<dbReference type="Pfam" id="PF02878">
    <property type="entry name" value="PGM_PMM_I"/>
    <property type="match status" value="1"/>
</dbReference>
<dbReference type="Pfam" id="PF02879">
    <property type="entry name" value="PGM_PMM_II"/>
    <property type="match status" value="1"/>
</dbReference>
<dbReference type="Pfam" id="PF02880">
    <property type="entry name" value="PGM_PMM_III"/>
    <property type="match status" value="1"/>
</dbReference>
<dbReference type="Pfam" id="PF00408">
    <property type="entry name" value="PGM_PMM_IV"/>
    <property type="match status" value="1"/>
</dbReference>
<dbReference type="PRINTS" id="PR00509">
    <property type="entry name" value="PGMPMM"/>
</dbReference>
<dbReference type="SUPFAM" id="SSF55957">
    <property type="entry name" value="Phosphoglucomutase, C-terminal domain"/>
    <property type="match status" value="1"/>
</dbReference>
<dbReference type="SUPFAM" id="SSF53738">
    <property type="entry name" value="Phosphoglucomutase, first 3 domains"/>
    <property type="match status" value="3"/>
</dbReference>
<dbReference type="PROSITE" id="PS00710">
    <property type="entry name" value="PGM_PMM"/>
    <property type="match status" value="1"/>
</dbReference>
<accession>Q2SML8</accession>
<protein>
    <recommendedName>
        <fullName evidence="1">Phosphoglucosamine mutase</fullName>
        <ecNumber evidence="1">5.4.2.10</ecNumber>
    </recommendedName>
</protein>
<sequence>MSKEYFGTDGIRGRVGEGPITPEFMLKLGWAAGRVFRQEGRRNRVLIGKDTRISGYIFESALESGLAAAGVDVAMLGPMPTPAIAYLTRTFRACAGIVISASHNPFNDNGVKFFSAEGTKLPDSTEEQIEHFIRQPMEIVPSSQLGKAARFEDAKGRYIEFCKSTVPFHMSFAGMRVVLDCAQGATYQVAPSVFKELGAKVETIGVTPDGLNINHEIGSTHPDQLAAKVVEAGADLGIAFDGDGDRVVMVDHKGEIVDGDEILYIIARDKMRKGRLKGGVVGTLMTNFGAELAFGELGIPFERANVGDRYVMEALLRNDWCLGGEGSGHIVCLDRTTTGDGIISSLQVLAALSDLGITLHEAKKGMSKLPQHMINVRVSQKVDIKGHTTIQSAVANAEKQFAGKGRVLLRSSGTEPVIRVMAEGEDEAKVRSIVAELAKIVEGSV</sequence>
<keyword id="KW-0413">Isomerase</keyword>
<keyword id="KW-0460">Magnesium</keyword>
<keyword id="KW-0479">Metal-binding</keyword>
<keyword id="KW-0597">Phosphoprotein</keyword>
<keyword id="KW-1185">Reference proteome</keyword>
<reference key="1">
    <citation type="journal article" date="2005" name="Nucleic Acids Res.">
        <title>Genomic blueprint of Hahella chejuensis, a marine microbe producing an algicidal agent.</title>
        <authorList>
            <person name="Jeong H."/>
            <person name="Yim J.H."/>
            <person name="Lee C."/>
            <person name="Choi S.-H."/>
            <person name="Park Y.K."/>
            <person name="Yoon S.H."/>
            <person name="Hur C.-G."/>
            <person name="Kang H.-Y."/>
            <person name="Kim D."/>
            <person name="Lee H.H."/>
            <person name="Park K.H."/>
            <person name="Park S.-H."/>
            <person name="Park H.-S."/>
            <person name="Lee H.K."/>
            <person name="Oh T.K."/>
            <person name="Kim J.F."/>
        </authorList>
    </citation>
    <scope>NUCLEOTIDE SEQUENCE [LARGE SCALE GENOMIC DNA]</scope>
    <source>
        <strain>KCTC 2396</strain>
    </source>
</reference>
<evidence type="ECO:0000255" key="1">
    <source>
        <dbReference type="HAMAP-Rule" id="MF_01554"/>
    </source>
</evidence>
<comment type="function">
    <text evidence="1">Catalyzes the conversion of glucosamine-6-phosphate to glucosamine-1-phosphate.</text>
</comment>
<comment type="catalytic activity">
    <reaction evidence="1">
        <text>alpha-D-glucosamine 1-phosphate = D-glucosamine 6-phosphate</text>
        <dbReference type="Rhea" id="RHEA:23424"/>
        <dbReference type="ChEBI" id="CHEBI:58516"/>
        <dbReference type="ChEBI" id="CHEBI:58725"/>
        <dbReference type="EC" id="5.4.2.10"/>
    </reaction>
</comment>
<comment type="cofactor">
    <cofactor evidence="1">
        <name>Mg(2+)</name>
        <dbReference type="ChEBI" id="CHEBI:18420"/>
    </cofactor>
    <text evidence="1">Binds 1 Mg(2+) ion per subunit.</text>
</comment>
<comment type="PTM">
    <text evidence="1">Activated by phosphorylation.</text>
</comment>
<comment type="similarity">
    <text evidence="1">Belongs to the phosphohexose mutase family.</text>
</comment>